<reference key="1">
    <citation type="submission" date="2004-11" db="EMBL/GenBank/DDBJ databases">
        <title>Complete genome sequence of Thermus thermophilus HB8.</title>
        <authorList>
            <person name="Masui R."/>
            <person name="Kurokawa K."/>
            <person name="Nakagawa N."/>
            <person name="Tokunaga F."/>
            <person name="Koyama Y."/>
            <person name="Shibata T."/>
            <person name="Oshima T."/>
            <person name="Yokoyama S."/>
            <person name="Yasunaga T."/>
            <person name="Kuramitsu S."/>
        </authorList>
    </citation>
    <scope>NUCLEOTIDE SEQUENCE [LARGE SCALE GENOMIC DNA]</scope>
    <source>
        <strain>ATCC 27634 / DSM 579 / HB8</strain>
    </source>
</reference>
<organism>
    <name type="scientific">Thermus thermophilus (strain ATCC 27634 / DSM 579 / HB8)</name>
    <dbReference type="NCBI Taxonomy" id="300852"/>
    <lineage>
        <taxon>Bacteria</taxon>
        <taxon>Thermotogati</taxon>
        <taxon>Deinococcota</taxon>
        <taxon>Deinococci</taxon>
        <taxon>Thermales</taxon>
        <taxon>Thermaceae</taxon>
        <taxon>Thermus</taxon>
    </lineage>
</organism>
<comment type="function">
    <text evidence="1">Specifically methylates guanosine-37 in various tRNAs.</text>
</comment>
<comment type="catalytic activity">
    <reaction evidence="1">
        <text>guanosine(37) in tRNA + S-adenosyl-L-methionine = N(1)-methylguanosine(37) in tRNA + S-adenosyl-L-homocysteine + H(+)</text>
        <dbReference type="Rhea" id="RHEA:36899"/>
        <dbReference type="Rhea" id="RHEA-COMP:10145"/>
        <dbReference type="Rhea" id="RHEA-COMP:10147"/>
        <dbReference type="ChEBI" id="CHEBI:15378"/>
        <dbReference type="ChEBI" id="CHEBI:57856"/>
        <dbReference type="ChEBI" id="CHEBI:59789"/>
        <dbReference type="ChEBI" id="CHEBI:73542"/>
        <dbReference type="ChEBI" id="CHEBI:74269"/>
        <dbReference type="EC" id="2.1.1.228"/>
    </reaction>
</comment>
<comment type="subunit">
    <text evidence="1">Homodimer.</text>
</comment>
<comment type="subcellular location">
    <subcellularLocation>
        <location evidence="1">Cytoplasm</location>
    </subcellularLocation>
</comment>
<comment type="similarity">
    <text evidence="1">Belongs to the RNA methyltransferase TrmD family.</text>
</comment>
<protein>
    <recommendedName>
        <fullName evidence="1">tRNA (guanine-N(1)-)-methyltransferase</fullName>
        <ecNumber evidence="1">2.1.1.228</ecNumber>
    </recommendedName>
    <alternativeName>
        <fullName evidence="1">M1G-methyltransferase</fullName>
    </alternativeName>
    <alternativeName>
        <fullName evidence="1">tRNA [GM37] methyltransferase</fullName>
    </alternativeName>
</protein>
<feature type="chain" id="PRO_0000060486" description="tRNA (guanine-N(1)-)-methyltransferase">
    <location>
        <begin position="1"/>
        <end position="239"/>
    </location>
</feature>
<feature type="binding site" evidence="1">
    <location>
        <position position="109"/>
    </location>
    <ligand>
        <name>S-adenosyl-L-methionine</name>
        <dbReference type="ChEBI" id="CHEBI:59789"/>
    </ligand>
</feature>
<feature type="binding site" evidence="1">
    <location>
        <begin position="128"/>
        <end position="133"/>
    </location>
    <ligand>
        <name>S-adenosyl-L-methionine</name>
        <dbReference type="ChEBI" id="CHEBI:59789"/>
    </ligand>
</feature>
<sequence>MRYTVITLFPNLVRPWLEESLLKKALERGLIRVEVVDLRAFGLGRHRTVDDTPYGGGAGMVIRPDVAVAALERALPADEVVLLSPAGRPFTQKVAEELAGKEHLVLLAGRYEGFDARVEAFATRILSIGDYVLMGGEVAALAVLEATARLVPGVIGDPQSHREDSFVRGLLDYPQYTRPPEFRGLRVPEVLLSGHHQEVERWRRQEALRRTLALRPELVARAPLSLLEARLLAEMDREE</sequence>
<evidence type="ECO:0000255" key="1">
    <source>
        <dbReference type="HAMAP-Rule" id="MF_00605"/>
    </source>
</evidence>
<accession>Q5SJH6</accession>
<keyword id="KW-0963">Cytoplasm</keyword>
<keyword id="KW-0489">Methyltransferase</keyword>
<keyword id="KW-1185">Reference proteome</keyword>
<keyword id="KW-0949">S-adenosyl-L-methionine</keyword>
<keyword id="KW-0808">Transferase</keyword>
<keyword id="KW-0819">tRNA processing</keyword>
<dbReference type="EC" id="2.1.1.228" evidence="1"/>
<dbReference type="EMBL" id="AP008226">
    <property type="protein sequence ID" value="BAD70855.1"/>
    <property type="molecule type" value="Genomic_DNA"/>
</dbReference>
<dbReference type="RefSeq" id="WP_008632436.1">
    <property type="nucleotide sequence ID" value="NC_006461.1"/>
</dbReference>
<dbReference type="RefSeq" id="YP_144298.1">
    <property type="nucleotide sequence ID" value="NC_006461.1"/>
</dbReference>
<dbReference type="SMR" id="Q5SJH6"/>
<dbReference type="EnsemblBacteria" id="BAD70855">
    <property type="protein sequence ID" value="BAD70855"/>
    <property type="gene ID" value="BAD70855"/>
</dbReference>
<dbReference type="GeneID" id="3168102"/>
<dbReference type="KEGG" id="ttj:TTHA1032"/>
<dbReference type="PATRIC" id="fig|300852.9.peg.1012"/>
<dbReference type="eggNOG" id="COG0336">
    <property type="taxonomic scope" value="Bacteria"/>
</dbReference>
<dbReference type="HOGENOM" id="CLU_047363_0_1_0"/>
<dbReference type="PhylomeDB" id="Q5SJH6"/>
<dbReference type="Proteomes" id="UP000000532">
    <property type="component" value="Chromosome"/>
</dbReference>
<dbReference type="GO" id="GO:0005829">
    <property type="term" value="C:cytosol"/>
    <property type="evidence" value="ECO:0007669"/>
    <property type="project" value="TreeGrafter"/>
</dbReference>
<dbReference type="GO" id="GO:0052906">
    <property type="term" value="F:tRNA (guanine(37)-N1)-methyltransferase activity"/>
    <property type="evidence" value="ECO:0007669"/>
    <property type="project" value="UniProtKB-UniRule"/>
</dbReference>
<dbReference type="GO" id="GO:0002939">
    <property type="term" value="P:tRNA N1-guanine methylation"/>
    <property type="evidence" value="ECO:0007669"/>
    <property type="project" value="TreeGrafter"/>
</dbReference>
<dbReference type="CDD" id="cd18080">
    <property type="entry name" value="TrmD-like"/>
    <property type="match status" value="1"/>
</dbReference>
<dbReference type="FunFam" id="1.10.1270.20:FF:000001">
    <property type="entry name" value="tRNA (guanine-N(1)-)-methyltransferase"/>
    <property type="match status" value="1"/>
</dbReference>
<dbReference type="Gene3D" id="3.40.1280.10">
    <property type="match status" value="1"/>
</dbReference>
<dbReference type="Gene3D" id="1.10.1270.20">
    <property type="entry name" value="tRNA(m1g37)methyltransferase, domain 2"/>
    <property type="match status" value="1"/>
</dbReference>
<dbReference type="HAMAP" id="MF_00605">
    <property type="entry name" value="TrmD"/>
    <property type="match status" value="1"/>
</dbReference>
<dbReference type="InterPro" id="IPR029028">
    <property type="entry name" value="Alpha/beta_knot_MTases"/>
</dbReference>
<dbReference type="InterPro" id="IPR023148">
    <property type="entry name" value="tRNA_m1G_MeTrfase_C_sf"/>
</dbReference>
<dbReference type="InterPro" id="IPR002649">
    <property type="entry name" value="tRNA_m1G_MeTrfase_TrmD"/>
</dbReference>
<dbReference type="InterPro" id="IPR029026">
    <property type="entry name" value="tRNA_m1G_MTases_N"/>
</dbReference>
<dbReference type="InterPro" id="IPR016009">
    <property type="entry name" value="tRNA_MeTrfase_TRMD/TRM10"/>
</dbReference>
<dbReference type="NCBIfam" id="NF000648">
    <property type="entry name" value="PRK00026.1"/>
    <property type="match status" value="1"/>
</dbReference>
<dbReference type="NCBIfam" id="TIGR00088">
    <property type="entry name" value="trmD"/>
    <property type="match status" value="1"/>
</dbReference>
<dbReference type="PANTHER" id="PTHR46417">
    <property type="entry name" value="TRNA (GUANINE-N(1)-)-METHYLTRANSFERASE"/>
    <property type="match status" value="1"/>
</dbReference>
<dbReference type="PANTHER" id="PTHR46417:SF1">
    <property type="entry name" value="TRNA (GUANINE-N(1)-)-METHYLTRANSFERASE"/>
    <property type="match status" value="1"/>
</dbReference>
<dbReference type="Pfam" id="PF01746">
    <property type="entry name" value="tRNA_m1G_MT"/>
    <property type="match status" value="1"/>
</dbReference>
<dbReference type="PIRSF" id="PIRSF000386">
    <property type="entry name" value="tRNA_mtase"/>
    <property type="match status" value="1"/>
</dbReference>
<dbReference type="SUPFAM" id="SSF75217">
    <property type="entry name" value="alpha/beta knot"/>
    <property type="match status" value="1"/>
</dbReference>
<name>TRMD_THET8</name>
<proteinExistence type="inferred from homology"/>
<gene>
    <name evidence="1" type="primary">trmD</name>
    <name type="ordered locus">TTHA1032</name>
</gene>